<protein>
    <recommendedName>
        <fullName evidence="1">Regulatory protein ViaA</fullName>
    </recommendedName>
    <alternativeName>
        <fullName evidence="1">VWA interacting with AAA+ ATPase</fullName>
    </alternativeName>
</protein>
<evidence type="ECO:0000255" key="1">
    <source>
        <dbReference type="HAMAP-Rule" id="MF_01626"/>
    </source>
</evidence>
<dbReference type="EMBL" id="CP001657">
    <property type="protein sequence ID" value="ACT15258.1"/>
    <property type="molecule type" value="Genomic_DNA"/>
</dbReference>
<dbReference type="RefSeq" id="WP_015842323.1">
    <property type="nucleotide sequence ID" value="NC_012917.1"/>
</dbReference>
<dbReference type="SMR" id="C6DJF9"/>
<dbReference type="STRING" id="561230.PC1_4244"/>
<dbReference type="GeneID" id="67796232"/>
<dbReference type="KEGG" id="pct:PC1_4244"/>
<dbReference type="eggNOG" id="COG2425">
    <property type="taxonomic scope" value="Bacteria"/>
</dbReference>
<dbReference type="HOGENOM" id="CLU_022130_0_0_6"/>
<dbReference type="OrthoDB" id="387240at2"/>
<dbReference type="Proteomes" id="UP000002736">
    <property type="component" value="Chromosome"/>
</dbReference>
<dbReference type="GO" id="GO:0005829">
    <property type="term" value="C:cytosol"/>
    <property type="evidence" value="ECO:0007669"/>
    <property type="project" value="TreeGrafter"/>
</dbReference>
<dbReference type="CDD" id="cd01462">
    <property type="entry name" value="VWA_YIEM_type"/>
    <property type="match status" value="1"/>
</dbReference>
<dbReference type="Gene3D" id="3.40.50.410">
    <property type="entry name" value="von Willebrand factor, type A domain"/>
    <property type="match status" value="1"/>
</dbReference>
<dbReference type="HAMAP" id="MF_01626">
    <property type="entry name" value="ViaA"/>
    <property type="match status" value="1"/>
</dbReference>
<dbReference type="InterPro" id="IPR008912">
    <property type="entry name" value="Uncharacterised_CoxE"/>
</dbReference>
<dbReference type="InterPro" id="IPR023481">
    <property type="entry name" value="Uncharacterised_ViaA"/>
</dbReference>
<dbReference type="InterPro" id="IPR002035">
    <property type="entry name" value="VWF_A"/>
</dbReference>
<dbReference type="InterPro" id="IPR036465">
    <property type="entry name" value="vWFA_dom_sf"/>
</dbReference>
<dbReference type="NCBIfam" id="NF008230">
    <property type="entry name" value="PRK10997.1"/>
    <property type="match status" value="1"/>
</dbReference>
<dbReference type="PANTHER" id="PTHR36846">
    <property type="entry name" value="PROTEIN VIAA"/>
    <property type="match status" value="1"/>
</dbReference>
<dbReference type="PANTHER" id="PTHR36846:SF1">
    <property type="entry name" value="PROTEIN VIAA"/>
    <property type="match status" value="1"/>
</dbReference>
<dbReference type="Pfam" id="PF05762">
    <property type="entry name" value="VWA_CoxE"/>
    <property type="match status" value="1"/>
</dbReference>
<dbReference type="SMART" id="SM00327">
    <property type="entry name" value="VWA"/>
    <property type="match status" value="1"/>
</dbReference>
<dbReference type="SUPFAM" id="SSF53300">
    <property type="entry name" value="vWA-like"/>
    <property type="match status" value="1"/>
</dbReference>
<proteinExistence type="inferred from homology"/>
<reference key="1">
    <citation type="submission" date="2009-07" db="EMBL/GenBank/DDBJ databases">
        <title>Complete sequence of Pectobacterium carotovorum subsp. carotovorum PC1.</title>
        <authorList>
            <consortium name="US DOE Joint Genome Institute"/>
            <person name="Lucas S."/>
            <person name="Copeland A."/>
            <person name="Lapidus A."/>
            <person name="Glavina del Rio T."/>
            <person name="Tice H."/>
            <person name="Bruce D."/>
            <person name="Goodwin L."/>
            <person name="Pitluck S."/>
            <person name="Munk A.C."/>
            <person name="Brettin T."/>
            <person name="Detter J.C."/>
            <person name="Han C."/>
            <person name="Tapia R."/>
            <person name="Larimer F."/>
            <person name="Land M."/>
            <person name="Hauser L."/>
            <person name="Kyrpides N."/>
            <person name="Mikhailova N."/>
            <person name="Balakrishnan V."/>
            <person name="Glasner J."/>
            <person name="Perna N.T."/>
        </authorList>
    </citation>
    <scope>NUCLEOTIDE SEQUENCE [LARGE SCALE GENOMIC DNA]</scope>
    <source>
        <strain>PC1</strain>
    </source>
</reference>
<accession>C6DJF9</accession>
<feature type="chain" id="PRO_1000215747" description="Regulatory protein ViaA">
    <location>
        <begin position="1"/>
        <end position="492"/>
    </location>
</feature>
<sequence length="492" mass="56397">MITLESLEMLLSIDENELLDDLVVTLLATPQLAFFFEKYPSLKSALLNDLPHWKETLKQRLRTTQVPPDLEKEFSCYQRSQSIDNQAFQTRLPAIMDTLSNVESPFLTQASQLITAPERTLGQKVTSGLHALFLQRWRLSLTLQTVSLHQQLMEQEREILLDELQQRLTLSGKLEPILAENENAAGRLWDLSAAQRIQTDPRPLLDFGAFLQRQPALQKLAERLGRSRETKSILTQEAPKEAFRVSVREPATVPEQVSGVHQSDDILRLMPTELVTLGISELEYEFYRRLLEHRLLTYRLQGESWREKITERPVVHQQNEQQPRGPFIVCVDTSGSMGGFNERCAKAFCLALMRIALADNRRCYIMLFSTGVVKYELTSADGLEQAIRFLSQSFRGGTDMSACLSALLDKMDDALWHDADAVVISDFIAQRLPDEVVNKVKSRQTQLQHRFHAVAMSDHGKPGIMHIFDHIWRFDTGLKSRLMRRWQHGKAY</sequence>
<organism>
    <name type="scientific">Pectobacterium carotovorum subsp. carotovorum (strain PC1)</name>
    <dbReference type="NCBI Taxonomy" id="561230"/>
    <lineage>
        <taxon>Bacteria</taxon>
        <taxon>Pseudomonadati</taxon>
        <taxon>Pseudomonadota</taxon>
        <taxon>Gammaproteobacteria</taxon>
        <taxon>Enterobacterales</taxon>
        <taxon>Pectobacteriaceae</taxon>
        <taxon>Pectobacterium</taxon>
    </lineage>
</organism>
<name>VIAA_PECCP</name>
<gene>
    <name evidence="1" type="primary">viaA</name>
    <name type="ordered locus">PC1_4244</name>
</gene>
<keyword id="KW-0143">Chaperone</keyword>
<keyword id="KW-0963">Cytoplasm</keyword>
<comment type="function">
    <text evidence="1">Component of the RavA-ViaA chaperone complex, which may act on the membrane to optimize the function of some of the respiratory chains. ViaA stimulates the ATPase activity of RavA.</text>
</comment>
<comment type="subunit">
    <text evidence="1">Homodimer. Interacts with RavA.</text>
</comment>
<comment type="subcellular location">
    <subcellularLocation>
        <location evidence="1">Cytoplasm</location>
    </subcellularLocation>
</comment>
<comment type="similarity">
    <text evidence="1">Belongs to the ViaA family.</text>
</comment>